<gene>
    <name evidence="1" type="primary">htpX</name>
    <name type="ordered locus">SUN_0433</name>
</gene>
<sequence length="276" mass="30693">MEQFKTYALMTGLTLLFIWFGGMIAGQTGMVIAFLVAAGMNFYAYYYSDQQVLSHYHAEPVDRAHASGLYQIVEKLTRRAGLPMPALYIIPEQQPNAFATGRNYEHAAVAVTEGLLDLMTDEEIEAVIAHELSHIKHYDMLIGTVAATIAGAIAMLANFGMFFGSGDRDRPNIFVMLALMFIMPMAASIIQMTVSRNREFMADEGSARMTGHPEWLQSALTKLDNYARSITLPEADPQTAHMFIINPFSGKDVSLKQLFSTHPSTEARIERLEALK</sequence>
<dbReference type="EC" id="3.4.24.-" evidence="1"/>
<dbReference type="EMBL" id="AP009179">
    <property type="protein sequence ID" value="BAF71393.1"/>
    <property type="molecule type" value="Genomic_DNA"/>
</dbReference>
<dbReference type="RefSeq" id="WP_011980126.1">
    <property type="nucleotide sequence ID" value="NC_009663.1"/>
</dbReference>
<dbReference type="STRING" id="387093.SUN_0433"/>
<dbReference type="KEGG" id="sun:SUN_0433"/>
<dbReference type="eggNOG" id="COG0501">
    <property type="taxonomic scope" value="Bacteria"/>
</dbReference>
<dbReference type="HOGENOM" id="CLU_042266_3_0_7"/>
<dbReference type="OrthoDB" id="15218at2"/>
<dbReference type="Proteomes" id="UP000006378">
    <property type="component" value="Chromosome"/>
</dbReference>
<dbReference type="GO" id="GO:0005886">
    <property type="term" value="C:plasma membrane"/>
    <property type="evidence" value="ECO:0007669"/>
    <property type="project" value="UniProtKB-SubCell"/>
</dbReference>
<dbReference type="GO" id="GO:0004222">
    <property type="term" value="F:metalloendopeptidase activity"/>
    <property type="evidence" value="ECO:0007669"/>
    <property type="project" value="UniProtKB-UniRule"/>
</dbReference>
<dbReference type="GO" id="GO:0008270">
    <property type="term" value="F:zinc ion binding"/>
    <property type="evidence" value="ECO:0007669"/>
    <property type="project" value="UniProtKB-UniRule"/>
</dbReference>
<dbReference type="GO" id="GO:0006508">
    <property type="term" value="P:proteolysis"/>
    <property type="evidence" value="ECO:0007669"/>
    <property type="project" value="UniProtKB-KW"/>
</dbReference>
<dbReference type="CDD" id="cd07336">
    <property type="entry name" value="M48B_HtpX_like"/>
    <property type="match status" value="1"/>
</dbReference>
<dbReference type="Gene3D" id="3.30.2010.10">
    <property type="entry name" value="Metalloproteases ('zincins'), catalytic domain"/>
    <property type="match status" value="1"/>
</dbReference>
<dbReference type="HAMAP" id="MF_00188">
    <property type="entry name" value="Pept_M48_protease_HtpX"/>
    <property type="match status" value="1"/>
</dbReference>
<dbReference type="InterPro" id="IPR050083">
    <property type="entry name" value="HtpX_protease"/>
</dbReference>
<dbReference type="InterPro" id="IPR022919">
    <property type="entry name" value="Pept_M48_protease_HtpX"/>
</dbReference>
<dbReference type="InterPro" id="IPR001915">
    <property type="entry name" value="Peptidase_M48"/>
</dbReference>
<dbReference type="NCBIfam" id="NF002826">
    <property type="entry name" value="PRK03001.1"/>
    <property type="match status" value="1"/>
</dbReference>
<dbReference type="PANTHER" id="PTHR43221">
    <property type="entry name" value="PROTEASE HTPX"/>
    <property type="match status" value="1"/>
</dbReference>
<dbReference type="PANTHER" id="PTHR43221:SF1">
    <property type="entry name" value="PROTEASE HTPX"/>
    <property type="match status" value="1"/>
</dbReference>
<dbReference type="Pfam" id="PF01435">
    <property type="entry name" value="Peptidase_M48"/>
    <property type="match status" value="1"/>
</dbReference>
<organism>
    <name type="scientific">Sulfurovum sp. (strain NBC37-1)</name>
    <dbReference type="NCBI Taxonomy" id="387093"/>
    <lineage>
        <taxon>Bacteria</taxon>
        <taxon>Pseudomonadati</taxon>
        <taxon>Campylobacterota</taxon>
        <taxon>Epsilonproteobacteria</taxon>
        <taxon>Campylobacterales</taxon>
        <taxon>Sulfurovaceae</taxon>
        <taxon>Sulfurovum</taxon>
    </lineage>
</organism>
<proteinExistence type="inferred from homology"/>
<reference key="1">
    <citation type="journal article" date="2007" name="Proc. Natl. Acad. Sci. U.S.A.">
        <title>Deep-sea vent epsilon-proteobacterial genomes provide insights into emergence of pathogens.</title>
        <authorList>
            <person name="Nakagawa S."/>
            <person name="Takaki Y."/>
            <person name="Shimamura S."/>
            <person name="Reysenbach A.-L."/>
            <person name="Takai K."/>
            <person name="Horikoshi K."/>
        </authorList>
    </citation>
    <scope>NUCLEOTIDE SEQUENCE [LARGE SCALE GENOMIC DNA]</scope>
    <source>
        <strain>NBC37-1</strain>
    </source>
</reference>
<feature type="chain" id="PRO_1000020960" description="Protease HtpX homolog">
    <location>
        <begin position="1"/>
        <end position="276"/>
    </location>
</feature>
<feature type="transmembrane region" description="Helical" evidence="1">
    <location>
        <begin position="16"/>
        <end position="36"/>
    </location>
</feature>
<feature type="transmembrane region" description="Helical" evidence="1">
    <location>
        <begin position="142"/>
        <end position="162"/>
    </location>
</feature>
<feature type="transmembrane region" description="Helical" evidence="1">
    <location>
        <begin position="173"/>
        <end position="193"/>
    </location>
</feature>
<feature type="active site" evidence="1">
    <location>
        <position position="131"/>
    </location>
</feature>
<feature type="binding site" evidence="1">
    <location>
        <position position="130"/>
    </location>
    <ligand>
        <name>Zn(2+)</name>
        <dbReference type="ChEBI" id="CHEBI:29105"/>
        <note>catalytic</note>
    </ligand>
</feature>
<feature type="binding site" evidence="1">
    <location>
        <position position="134"/>
    </location>
    <ligand>
        <name>Zn(2+)</name>
        <dbReference type="ChEBI" id="CHEBI:29105"/>
        <note>catalytic</note>
    </ligand>
</feature>
<feature type="binding site" evidence="1">
    <location>
        <position position="199"/>
    </location>
    <ligand>
        <name>Zn(2+)</name>
        <dbReference type="ChEBI" id="CHEBI:29105"/>
        <note>catalytic</note>
    </ligand>
</feature>
<keyword id="KW-0997">Cell inner membrane</keyword>
<keyword id="KW-1003">Cell membrane</keyword>
<keyword id="KW-0378">Hydrolase</keyword>
<keyword id="KW-0472">Membrane</keyword>
<keyword id="KW-0479">Metal-binding</keyword>
<keyword id="KW-0482">Metalloprotease</keyword>
<keyword id="KW-0645">Protease</keyword>
<keyword id="KW-0812">Transmembrane</keyword>
<keyword id="KW-1133">Transmembrane helix</keyword>
<keyword id="KW-0862">Zinc</keyword>
<comment type="cofactor">
    <cofactor evidence="1">
        <name>Zn(2+)</name>
        <dbReference type="ChEBI" id="CHEBI:29105"/>
    </cofactor>
    <text evidence="1">Binds 1 zinc ion per subunit.</text>
</comment>
<comment type="subcellular location">
    <subcellularLocation>
        <location evidence="1">Cell inner membrane</location>
        <topology evidence="1">Multi-pass membrane protein</topology>
    </subcellularLocation>
</comment>
<comment type="similarity">
    <text evidence="1">Belongs to the peptidase M48B family.</text>
</comment>
<protein>
    <recommendedName>
        <fullName evidence="1">Protease HtpX homolog</fullName>
        <ecNumber evidence="1">3.4.24.-</ecNumber>
    </recommendedName>
</protein>
<name>HTPX_SULNB</name>
<evidence type="ECO:0000255" key="1">
    <source>
        <dbReference type="HAMAP-Rule" id="MF_00188"/>
    </source>
</evidence>
<accession>A6Q7D4</accession>